<protein>
    <recommendedName>
        <fullName evidence="4">S-formylglutathione hydrolase</fullName>
        <shortName evidence="4">AtSFGH</shortName>
        <ecNumber evidence="6">3.1.2.12</ecNumber>
    </recommendedName>
    <alternativeName>
        <fullName>Esterase D</fullName>
    </alternativeName>
</protein>
<organism>
    <name type="scientific">Arabidopsis thaliana</name>
    <name type="common">Mouse-ear cress</name>
    <dbReference type="NCBI Taxonomy" id="3702"/>
    <lineage>
        <taxon>Eukaryota</taxon>
        <taxon>Viridiplantae</taxon>
        <taxon>Streptophyta</taxon>
        <taxon>Embryophyta</taxon>
        <taxon>Tracheophyta</taxon>
        <taxon>Spermatophyta</taxon>
        <taxon>Magnoliopsida</taxon>
        <taxon>eudicotyledons</taxon>
        <taxon>Gunneridae</taxon>
        <taxon>Pentapetalae</taxon>
        <taxon>rosids</taxon>
        <taxon>malvids</taxon>
        <taxon>Brassicales</taxon>
        <taxon>Brassicaceae</taxon>
        <taxon>Camelineae</taxon>
        <taxon>Arabidopsis</taxon>
    </lineage>
</organism>
<evidence type="ECO:0000250" key="1"/>
<evidence type="ECO:0000269" key="2">
    <source>
    </source>
</evidence>
<evidence type="ECO:0000269" key="3">
    <source>
    </source>
</evidence>
<evidence type="ECO:0000303" key="4">
    <source>
    </source>
</evidence>
<evidence type="ECO:0000305" key="5"/>
<evidence type="ECO:0000305" key="6">
    <source>
    </source>
</evidence>
<evidence type="ECO:0007744" key="7">
    <source>
    </source>
</evidence>
<proteinExistence type="evidence at protein level"/>
<name>SFGH_ARATH</name>
<gene>
    <name type="primary">SFGH</name>
    <name type="ordered locus">At2g41530</name>
    <name type="ORF">T32G6.5</name>
</gene>
<reference key="1">
    <citation type="journal article" date="2002" name="Arch. Biochem. Biophys.">
        <title>Cloning and characterization of an S-formylglutathione hydrolase from Arabidopsis thaliana.</title>
        <authorList>
            <person name="Kordic S."/>
            <person name="Cummins I."/>
            <person name="Edwards R."/>
        </authorList>
    </citation>
    <scope>NUCLEOTIDE SEQUENCE [MRNA]</scope>
    <scope>FUNCTION</scope>
    <scope>CATALYTIC ACTIVITY</scope>
    <scope>BIOPHYSICOCHEMICAL PROPERTIES</scope>
    <scope>CHARACTERIZATION</scope>
    <source>
        <strain>cv. Columbia</strain>
    </source>
</reference>
<reference key="2">
    <citation type="journal article" date="1999" name="Nature">
        <title>Sequence and analysis of chromosome 2 of the plant Arabidopsis thaliana.</title>
        <authorList>
            <person name="Lin X."/>
            <person name="Kaul S."/>
            <person name="Rounsley S.D."/>
            <person name="Shea T.P."/>
            <person name="Benito M.-I."/>
            <person name="Town C.D."/>
            <person name="Fujii C.Y."/>
            <person name="Mason T.M."/>
            <person name="Bowman C.L."/>
            <person name="Barnstead M.E."/>
            <person name="Feldblyum T.V."/>
            <person name="Buell C.R."/>
            <person name="Ketchum K.A."/>
            <person name="Lee J.J."/>
            <person name="Ronning C.M."/>
            <person name="Koo H.L."/>
            <person name="Moffat K.S."/>
            <person name="Cronin L.A."/>
            <person name="Shen M."/>
            <person name="Pai G."/>
            <person name="Van Aken S."/>
            <person name="Umayam L."/>
            <person name="Tallon L.J."/>
            <person name="Gill J.E."/>
            <person name="Adams M.D."/>
            <person name="Carrera A.J."/>
            <person name="Creasy T.H."/>
            <person name="Goodman H.M."/>
            <person name="Somerville C.R."/>
            <person name="Copenhaver G.P."/>
            <person name="Preuss D."/>
            <person name="Nierman W.C."/>
            <person name="White O."/>
            <person name="Eisen J.A."/>
            <person name="Salzberg S.L."/>
            <person name="Fraser C.M."/>
            <person name="Venter J.C."/>
        </authorList>
    </citation>
    <scope>NUCLEOTIDE SEQUENCE [LARGE SCALE GENOMIC DNA]</scope>
    <source>
        <strain>cv. Columbia</strain>
    </source>
</reference>
<reference key="3">
    <citation type="journal article" date="2017" name="Plant J.">
        <title>Araport11: a complete reannotation of the Arabidopsis thaliana reference genome.</title>
        <authorList>
            <person name="Cheng C.Y."/>
            <person name="Krishnakumar V."/>
            <person name="Chan A.P."/>
            <person name="Thibaud-Nissen F."/>
            <person name="Schobel S."/>
            <person name="Town C.D."/>
        </authorList>
    </citation>
    <scope>GENOME REANNOTATION</scope>
    <source>
        <strain>cv. Columbia</strain>
    </source>
</reference>
<reference key="4">
    <citation type="journal article" date="2003" name="Science">
        <title>Empirical analysis of transcriptional activity in the Arabidopsis genome.</title>
        <authorList>
            <person name="Yamada K."/>
            <person name="Lim J."/>
            <person name="Dale J.M."/>
            <person name="Chen H."/>
            <person name="Shinn P."/>
            <person name="Palm C.J."/>
            <person name="Southwick A.M."/>
            <person name="Wu H.C."/>
            <person name="Kim C.J."/>
            <person name="Nguyen M."/>
            <person name="Pham P.K."/>
            <person name="Cheuk R.F."/>
            <person name="Karlin-Newmann G."/>
            <person name="Liu S.X."/>
            <person name="Lam B."/>
            <person name="Sakano H."/>
            <person name="Wu T."/>
            <person name="Yu G."/>
            <person name="Miranda M."/>
            <person name="Quach H.L."/>
            <person name="Tripp M."/>
            <person name="Chang C.H."/>
            <person name="Lee J.M."/>
            <person name="Toriumi M.J."/>
            <person name="Chan M.M."/>
            <person name="Tang C.C."/>
            <person name="Onodera C.S."/>
            <person name="Deng J.M."/>
            <person name="Akiyama K."/>
            <person name="Ansari Y."/>
            <person name="Arakawa T."/>
            <person name="Banh J."/>
            <person name="Banno F."/>
            <person name="Bowser L."/>
            <person name="Brooks S.Y."/>
            <person name="Carninci P."/>
            <person name="Chao Q."/>
            <person name="Choy N."/>
            <person name="Enju A."/>
            <person name="Goldsmith A.D."/>
            <person name="Gurjal M."/>
            <person name="Hansen N.F."/>
            <person name="Hayashizaki Y."/>
            <person name="Johnson-Hopson C."/>
            <person name="Hsuan V.W."/>
            <person name="Iida K."/>
            <person name="Karnes M."/>
            <person name="Khan S."/>
            <person name="Koesema E."/>
            <person name="Ishida J."/>
            <person name="Jiang P.X."/>
            <person name="Jones T."/>
            <person name="Kawai J."/>
            <person name="Kamiya A."/>
            <person name="Meyers C."/>
            <person name="Nakajima M."/>
            <person name="Narusaka M."/>
            <person name="Seki M."/>
            <person name="Sakurai T."/>
            <person name="Satou M."/>
            <person name="Tamse R."/>
            <person name="Vaysberg M."/>
            <person name="Wallender E.K."/>
            <person name="Wong C."/>
            <person name="Yamamura Y."/>
            <person name="Yuan S."/>
            <person name="Shinozaki K."/>
            <person name="Davis R.W."/>
            <person name="Theologis A."/>
            <person name="Ecker J.R."/>
        </authorList>
    </citation>
    <scope>NUCLEOTIDE SEQUENCE [LARGE SCALE MRNA]</scope>
    <source>
        <strain>cv. Columbia</strain>
    </source>
</reference>
<reference key="5">
    <citation type="submission" date="2002-03" db="EMBL/GenBank/DDBJ databases">
        <title>Full-length cDNA from Arabidopsis thaliana.</title>
        <authorList>
            <person name="Brover V.V."/>
            <person name="Troukhan M.E."/>
            <person name="Alexandrov N.A."/>
            <person name="Lu Y.-P."/>
            <person name="Flavell R.B."/>
            <person name="Feldmann K.A."/>
        </authorList>
    </citation>
    <scope>NUCLEOTIDE SEQUENCE [LARGE SCALE MRNA]</scope>
</reference>
<reference key="6">
    <citation type="journal article" date="2012" name="Mol. Cell. Proteomics">
        <title>Comparative large-scale characterisation of plant vs. mammal proteins reveals similar and idiosyncratic N-alpha acetylation features.</title>
        <authorList>
            <person name="Bienvenut W.V."/>
            <person name="Sumpton D."/>
            <person name="Martinez A."/>
            <person name="Lilla S."/>
            <person name="Espagne C."/>
            <person name="Meinnel T."/>
            <person name="Giglione C."/>
        </authorList>
    </citation>
    <scope>ACETYLATION [LARGE SCALE ANALYSIS] AT ALA-2</scope>
    <scope>CLEAVAGE OF INITIATOR METHIONINE [LARGE SCALE ANALYSIS]</scope>
    <scope>IDENTIFICATION BY MASS SPECTROMETRY [LARGE SCALE ANALYSIS]</scope>
</reference>
<reference key="7">
    <citation type="journal article" date="2003" name="Acta Crystallogr. D">
        <title>Purification, crystallization and preliminary X-ray diffraction analysis of S-formylglutathione hydrolase from Arabidopsis thaliana: effects of pressure and selenomethionine substitution on space-group changes.</title>
        <authorList>
            <person name="McAuley K.E."/>
            <person name="Cummins I."/>
            <person name="Papiz M."/>
            <person name="Edwards R."/>
            <person name="Fordham-Skelton A.P."/>
        </authorList>
    </citation>
    <scope>X-RAY CRYSTALLOGRAPHY (1.7 ANGSTROMS)</scope>
</reference>
<reference key="8">
    <citation type="journal article" date="2006" name="J. Mol. Biol.">
        <title>Unique regulation of the active site of the serine esterase S-formylglutathione hydrolase.</title>
        <authorList>
            <person name="Cummins I."/>
            <person name="McAuley K."/>
            <person name="Fordham-Skelton A."/>
            <person name="Schwoerer R."/>
            <person name="Steel P.G."/>
            <person name="Davis B.G."/>
            <person name="Edwards R."/>
        </authorList>
    </citation>
    <scope>X-RAY CRYSTALLOGRAPHY (1.7 ANGSTROMS)</scope>
    <scope>FUNCTION</scope>
    <scope>MUTAGENESIS OF CYS-59 AND SER-152</scope>
    <scope>ACTIVITY REGULATION</scope>
    <scope>SUBUNIT</scope>
</reference>
<sequence length="284" mass="31656">MASGLSEIGSTKMFDGYNKRYKHFSETLGCSMTFSIYFPPSASSSHKSPVLYWLSGLTCTDENFIIKSGAQRAASTHGIALVAPDTSPRGLNVEGEADSYDFGVGAGFYLNATQEKWKNWRMYDYVVKELPKLLSENFSQLDTTKASISGHSMGGHGALTIYLRNLDKYKSVSAFAPITNPINCAWGQKAFTNYLGDNKAAWEEYDATCLISKYNNLSATILIDQGENDQFYPDQLLPSKFEEACKKVNAPLLLRLHPGYDHSYYFIATFIEDHISHHAQALEL</sequence>
<feature type="initiator methionine" description="Removed" evidence="7">
    <location>
        <position position="1"/>
    </location>
</feature>
<feature type="chain" id="PRO_0000248156" description="S-formylglutathione hydrolase">
    <location>
        <begin position="2"/>
        <end position="284"/>
    </location>
</feature>
<feature type="active site" description="Charge relay system" evidence="1">
    <location>
        <position position="152"/>
    </location>
</feature>
<feature type="active site" description="Charge relay system" evidence="1">
    <location>
        <position position="229"/>
    </location>
</feature>
<feature type="active site" description="Charge relay system" evidence="1">
    <location>
        <position position="262"/>
    </location>
</feature>
<feature type="binding site">
    <location>
        <position position="63"/>
    </location>
    <ligand>
        <name>substrate</name>
    </ligand>
</feature>
<feature type="binding site">
    <location>
        <position position="67"/>
    </location>
    <ligand>
        <name>substrate</name>
    </ligand>
</feature>
<feature type="modified residue" description="N-acetylalanine" evidence="7">
    <location>
        <position position="2"/>
    </location>
</feature>
<feature type="mutagenesis site" description="Loss of catalysis regulation." evidence="3">
    <original>C</original>
    <variation>S</variation>
    <location>
        <position position="59"/>
    </location>
</feature>
<feature type="mutagenesis site" description="Loss of activity." evidence="3">
    <original>S</original>
    <variation>A</variation>
    <location>
        <position position="152"/>
    </location>
</feature>
<feature type="sequence conflict" description="In Ref. 5; AAM65175." evidence="5" ref="5">
    <original>S</original>
    <variation>N</variation>
    <location>
        <position position="3"/>
    </location>
</feature>
<comment type="function">
    <text evidence="2 3 6">Serine hydrolase which catalyzes the hydrolysis of S-formylglutathione to glutathione and formic acid (Probable). Also hydrolyzes S-acetylglutathione and a range of carboxyesters in vitro (PubMed:11888210). Involved in the detoxification of formaldehyde (PubMed:16626737).</text>
</comment>
<comment type="catalytic activity">
    <reaction evidence="6">
        <text>S-formylglutathione + H2O = formate + glutathione + H(+)</text>
        <dbReference type="Rhea" id="RHEA:14961"/>
        <dbReference type="ChEBI" id="CHEBI:15377"/>
        <dbReference type="ChEBI" id="CHEBI:15378"/>
        <dbReference type="ChEBI" id="CHEBI:15740"/>
        <dbReference type="ChEBI" id="CHEBI:57688"/>
        <dbReference type="ChEBI" id="CHEBI:57925"/>
        <dbReference type="EC" id="3.1.2.12"/>
    </reaction>
    <physiologicalReaction direction="left-to-right" evidence="6">
        <dbReference type="Rhea" id="RHEA:14962"/>
    </physiologicalReaction>
</comment>
<comment type="activity regulation">
    <text evidence="3">Activity toward p-nitrophenyl acetate inhibited by N-ethylmaleimide, 10-(fluoroethoxyphosphinyl)-N-(biotinamidopentyl)decanamide (FP-biotin), iodoacetamide, CuCl(2) and ZnSO(4), but not by phenylmethylsulfonyl fluoride, EDTA, Mg(2+), Mn(2+), Ca(2+) or paraoxon, an organo-phosphate inhibitor of serine hydrolases.</text>
</comment>
<comment type="biophysicochemical properties">
    <kinetics>
        <KM evidence="2">0.13 mM for S-formylglutathione</KM>
        <KM evidence="2">0.15 mM for S-acetylglutathione</KM>
        <KM evidence="2">1.02 mM for p-nitrophenyl acetate</KM>
        <KM evidence="2">0.57 mM for alpha-naphthyl acetate</KM>
        <KM evidence="2">0.54 mM for beta-naphthyl acetate</KM>
        <KM evidence="2">0.03 mM for fluorescein diacetate</KM>
        <KM evidence="2">0.12 mM for 4-methylumbelliferyl acetate</KM>
        <Vmax evidence="2">219.0 nmol/sec/mg enzyme with S-formylglutathione as substrate</Vmax>
        <Vmax evidence="2">311.0 nmol/sec/mg enzyme with S-acetylglutathione as substrate</Vmax>
        <Vmax evidence="2">185.0 nmol/sec/mg enzyme with p-nitrophenyl acetate as substrate</Vmax>
        <Vmax evidence="2">350.0 nmol/sec/mg enzyme with alpha-naphthyl acetate as substrate</Vmax>
        <Vmax evidence="2">22.0 nmol/sec/mg enzyme with beta-naphthyl acetate as substrate</Vmax>
        <Vmax evidence="2">3.0 nmol/sec/mg enzyme with fluorescein diacetate as substrate</Vmax>
        <Vmax evidence="2">714.0 nmol/sec/mg enzyme with 4-methylumbelliferyl acetate as substrate</Vmax>
    </kinetics>
    <phDependence>
        <text>Optimum pH is 7.6-8 for carboxyesterase activity.</text>
    </phDependence>
    <temperatureDependence>
        <text>Fully active up to 55 degrees Celsius.</text>
    </temperatureDependence>
</comment>
<comment type="subunit">
    <text evidence="3">Homodimer.</text>
</comment>
<comment type="miscellaneous">
    <text>The conserved Cys-59, implicated in catalysis in cysteine hydrolases, lies in close proximity to the serine hydrolase triad, serving a gate-keeping function in regulating access to the active site via disulfide formation with glutathione.</text>
</comment>
<comment type="similarity">
    <text evidence="5">Belongs to the esterase D family.</text>
</comment>
<comment type="caution">
    <text evidence="6">Was originally classified as an esterase D due to its apparent insensitivity to serine hydrolase inhibitors.</text>
</comment>
<comment type="sequence caution" evidence="5">
    <conflict type="erroneous initiation">
        <sequence resource="EMBL-CDS" id="AAM65175"/>
    </conflict>
    <text>Truncated N-terminus.</text>
</comment>
<keyword id="KW-0007">Acetylation</keyword>
<keyword id="KW-0378">Hydrolase</keyword>
<keyword id="KW-1185">Reference proteome</keyword>
<keyword id="KW-0719">Serine esterase</keyword>
<dbReference type="EC" id="3.1.2.12" evidence="6"/>
<dbReference type="EMBL" id="AJ347732">
    <property type="protein sequence ID" value="CAC87877.1"/>
    <property type="molecule type" value="mRNA"/>
</dbReference>
<dbReference type="EMBL" id="AC002510">
    <property type="protein sequence ID" value="AAB84335.1"/>
    <property type="molecule type" value="Genomic_DNA"/>
</dbReference>
<dbReference type="EMBL" id="CP002685">
    <property type="protein sequence ID" value="AEC09995.1"/>
    <property type="molecule type" value="Genomic_DNA"/>
</dbReference>
<dbReference type="EMBL" id="AY044322">
    <property type="protein sequence ID" value="AAK73263.1"/>
    <property type="molecule type" value="mRNA"/>
</dbReference>
<dbReference type="EMBL" id="AF446861">
    <property type="protein sequence ID" value="AAL38594.1"/>
    <property type="molecule type" value="mRNA"/>
</dbReference>
<dbReference type="EMBL" id="AF378875">
    <property type="protein sequence ID" value="AAK55678.1"/>
    <property type="molecule type" value="mRNA"/>
</dbReference>
<dbReference type="EMBL" id="AY087636">
    <property type="protein sequence ID" value="AAM65175.1"/>
    <property type="status" value="ALT_INIT"/>
    <property type="molecule type" value="mRNA"/>
</dbReference>
<dbReference type="PIR" id="T00809">
    <property type="entry name" value="T00809"/>
</dbReference>
<dbReference type="RefSeq" id="NP_181684.1">
    <property type="nucleotide sequence ID" value="NM_129716.4"/>
</dbReference>
<dbReference type="SMR" id="Q8LAS8"/>
<dbReference type="BioGRID" id="4088">
    <property type="interactions" value="2"/>
</dbReference>
<dbReference type="FunCoup" id="Q8LAS8">
    <property type="interactions" value="3698"/>
</dbReference>
<dbReference type="IntAct" id="Q8LAS8">
    <property type="interactions" value="1"/>
</dbReference>
<dbReference type="STRING" id="3702.Q8LAS8"/>
<dbReference type="ESTHER" id="arath-SFGH">
    <property type="family name" value="A85-EsteraseD-FGH"/>
</dbReference>
<dbReference type="iPTMnet" id="Q8LAS8"/>
<dbReference type="PaxDb" id="3702-AT2G41530.1"/>
<dbReference type="ProteomicsDB" id="232578"/>
<dbReference type="EnsemblPlants" id="AT2G41530.1">
    <property type="protein sequence ID" value="AT2G41530.1"/>
    <property type="gene ID" value="AT2G41530"/>
</dbReference>
<dbReference type="GeneID" id="818751"/>
<dbReference type="Gramene" id="AT2G41530.1">
    <property type="protein sequence ID" value="AT2G41530.1"/>
    <property type="gene ID" value="AT2G41530"/>
</dbReference>
<dbReference type="KEGG" id="ath:AT2G41530"/>
<dbReference type="Araport" id="AT2G41530"/>
<dbReference type="TAIR" id="AT2G41530">
    <property type="gene designation" value="SFGH"/>
</dbReference>
<dbReference type="eggNOG" id="KOG3101">
    <property type="taxonomic scope" value="Eukaryota"/>
</dbReference>
<dbReference type="HOGENOM" id="CLU_056472_0_1_1"/>
<dbReference type="InParanoid" id="Q8LAS8"/>
<dbReference type="OMA" id="PSDCPWG"/>
<dbReference type="PhylomeDB" id="Q8LAS8"/>
<dbReference type="BioCyc" id="ARA:AT2G41530-MONOMER"/>
<dbReference type="BRENDA" id="3.1.2.12">
    <property type="organism ID" value="399"/>
</dbReference>
<dbReference type="CD-CODE" id="4299E36E">
    <property type="entry name" value="Nucleolus"/>
</dbReference>
<dbReference type="PRO" id="PR:Q8LAS8"/>
<dbReference type="Proteomes" id="UP000006548">
    <property type="component" value="Chromosome 2"/>
</dbReference>
<dbReference type="ExpressionAtlas" id="Q8LAS8">
    <property type="expression patterns" value="baseline and differential"/>
</dbReference>
<dbReference type="GO" id="GO:0048046">
    <property type="term" value="C:apoplast"/>
    <property type="evidence" value="ECO:0007005"/>
    <property type="project" value="TAIR"/>
</dbReference>
<dbReference type="GO" id="GO:0005829">
    <property type="term" value="C:cytosol"/>
    <property type="evidence" value="ECO:0007005"/>
    <property type="project" value="TAIR"/>
</dbReference>
<dbReference type="GO" id="GO:0052689">
    <property type="term" value="F:carboxylic ester hydrolase activity"/>
    <property type="evidence" value="ECO:0007669"/>
    <property type="project" value="UniProtKB-KW"/>
</dbReference>
<dbReference type="GO" id="GO:0018738">
    <property type="term" value="F:S-formylglutathione hydrolase activity"/>
    <property type="evidence" value="ECO:0000314"/>
    <property type="project" value="TAIR"/>
</dbReference>
<dbReference type="GO" id="GO:0046294">
    <property type="term" value="P:formaldehyde catabolic process"/>
    <property type="evidence" value="ECO:0007669"/>
    <property type="project" value="InterPro"/>
</dbReference>
<dbReference type="FunFam" id="3.40.50.1820:FF:000002">
    <property type="entry name" value="S-formylglutathione hydrolase"/>
    <property type="match status" value="1"/>
</dbReference>
<dbReference type="Gene3D" id="3.40.50.1820">
    <property type="entry name" value="alpha/beta hydrolase"/>
    <property type="match status" value="1"/>
</dbReference>
<dbReference type="InterPro" id="IPR029058">
    <property type="entry name" value="AB_hydrolase_fold"/>
</dbReference>
<dbReference type="InterPro" id="IPR000801">
    <property type="entry name" value="Esterase-like"/>
</dbReference>
<dbReference type="InterPro" id="IPR014186">
    <property type="entry name" value="S-formylglutathione_hydrol"/>
</dbReference>
<dbReference type="NCBIfam" id="TIGR02821">
    <property type="entry name" value="fghA_ester_D"/>
    <property type="match status" value="1"/>
</dbReference>
<dbReference type="PANTHER" id="PTHR10061">
    <property type="entry name" value="S-FORMYLGLUTATHIONE HYDROLASE"/>
    <property type="match status" value="1"/>
</dbReference>
<dbReference type="PANTHER" id="PTHR10061:SF0">
    <property type="entry name" value="S-FORMYLGLUTATHIONE HYDROLASE"/>
    <property type="match status" value="1"/>
</dbReference>
<dbReference type="Pfam" id="PF00756">
    <property type="entry name" value="Esterase"/>
    <property type="match status" value="1"/>
</dbReference>
<dbReference type="SUPFAM" id="SSF53474">
    <property type="entry name" value="alpha/beta-Hydrolases"/>
    <property type="match status" value="1"/>
</dbReference>
<accession>Q8LAS8</accession>
<accession>O22215</accession>